<proteinExistence type="inferred from homology"/>
<evidence type="ECO:0000255" key="1">
    <source>
        <dbReference type="HAMAP-Rule" id="MF_00598"/>
    </source>
</evidence>
<sequence>MRESVINVLFYLFDDILTEQDGQEADLNQMAHWLSEAGFAHEDVGRAMDWFCELGKIGDYQPIIQTNPAVRIFSPQEAYFIDEEGQDFLRGLCRAGVLDTQLQETVIERAIALEEPLSLETLHWVVMMVIMNTGASETVWERKWSQIWLVDDDDHSVMQ</sequence>
<protein>
    <recommendedName>
        <fullName evidence="1">Protein Smg homolog</fullName>
    </recommendedName>
</protein>
<feature type="chain" id="PRO_1000146993" description="Protein Smg homolog">
    <location>
        <begin position="1"/>
        <end position="159"/>
    </location>
</feature>
<organism>
    <name type="scientific">Dichelobacter nodosus (strain VCS1703A)</name>
    <dbReference type="NCBI Taxonomy" id="246195"/>
    <lineage>
        <taxon>Bacteria</taxon>
        <taxon>Pseudomonadati</taxon>
        <taxon>Pseudomonadota</taxon>
        <taxon>Gammaproteobacteria</taxon>
        <taxon>Cardiobacteriales</taxon>
        <taxon>Cardiobacteriaceae</taxon>
        <taxon>Dichelobacter</taxon>
    </lineage>
</organism>
<name>SMG_DICNV</name>
<gene>
    <name evidence="1" type="primary">smg</name>
    <name type="ordered locus">DNO_0153</name>
</gene>
<reference key="1">
    <citation type="journal article" date="2007" name="Nat. Biotechnol.">
        <title>Genome sequence and identification of candidate vaccine antigens from the animal pathogen Dichelobacter nodosus.</title>
        <authorList>
            <person name="Myers G.S.A."/>
            <person name="Parker D."/>
            <person name="Al-Hasani K."/>
            <person name="Kennan R.M."/>
            <person name="Seemann T."/>
            <person name="Ren Q."/>
            <person name="Badger J.H."/>
            <person name="Selengut J.D."/>
            <person name="Deboy R.T."/>
            <person name="Tettelin H."/>
            <person name="Boyce J.D."/>
            <person name="McCarl V.P."/>
            <person name="Han X."/>
            <person name="Nelson W.C."/>
            <person name="Madupu R."/>
            <person name="Mohamoud Y."/>
            <person name="Holley T."/>
            <person name="Fedorova N."/>
            <person name="Khouri H."/>
            <person name="Bottomley S.P."/>
            <person name="Whittington R.J."/>
            <person name="Adler B."/>
            <person name="Songer J.G."/>
            <person name="Rood J.I."/>
            <person name="Paulsen I.T."/>
        </authorList>
    </citation>
    <scope>NUCLEOTIDE SEQUENCE [LARGE SCALE GENOMIC DNA]</scope>
    <source>
        <strain>VCS1703A</strain>
    </source>
</reference>
<keyword id="KW-1185">Reference proteome</keyword>
<accession>A5EWL5</accession>
<dbReference type="EMBL" id="CP000513">
    <property type="protein sequence ID" value="ABQ14061.1"/>
    <property type="molecule type" value="Genomic_DNA"/>
</dbReference>
<dbReference type="RefSeq" id="WP_011927904.1">
    <property type="nucleotide sequence ID" value="NC_009446.1"/>
</dbReference>
<dbReference type="STRING" id="246195.DNO_0153"/>
<dbReference type="KEGG" id="dno:DNO_0153"/>
<dbReference type="eggNOG" id="COG2922">
    <property type="taxonomic scope" value="Bacteria"/>
</dbReference>
<dbReference type="HOGENOM" id="CLU_133242_0_0_6"/>
<dbReference type="OrthoDB" id="9788984at2"/>
<dbReference type="Proteomes" id="UP000000248">
    <property type="component" value="Chromosome"/>
</dbReference>
<dbReference type="HAMAP" id="MF_00598">
    <property type="entry name" value="Smg"/>
    <property type="match status" value="1"/>
</dbReference>
<dbReference type="InterPro" id="IPR007456">
    <property type="entry name" value="Smg"/>
</dbReference>
<dbReference type="PANTHER" id="PTHR38692">
    <property type="entry name" value="PROTEIN SMG"/>
    <property type="match status" value="1"/>
</dbReference>
<dbReference type="PANTHER" id="PTHR38692:SF1">
    <property type="entry name" value="PROTEIN SMG"/>
    <property type="match status" value="1"/>
</dbReference>
<dbReference type="Pfam" id="PF04361">
    <property type="entry name" value="DUF494"/>
    <property type="match status" value="1"/>
</dbReference>
<comment type="similarity">
    <text evidence="1">Belongs to the Smg family.</text>
</comment>